<organism>
    <name type="scientific">Methanococcus vannielii</name>
    <dbReference type="NCBI Taxonomy" id="2187"/>
    <lineage>
        <taxon>Archaea</taxon>
        <taxon>Methanobacteriati</taxon>
        <taxon>Methanobacteriota</taxon>
        <taxon>Methanomada group</taxon>
        <taxon>Methanococci</taxon>
        <taxon>Methanococcales</taxon>
        <taxon>Methanococcaceae</taxon>
        <taxon>Methanococcus</taxon>
    </lineage>
</organism>
<dbReference type="EC" id="2.5.1.131" evidence="1"/>
<dbReference type="EMBL" id="M21315">
    <property type="protein sequence ID" value="AAA88321.1"/>
    <property type="molecule type" value="Genomic_DNA"/>
</dbReference>
<dbReference type="SMR" id="Q50834"/>
<dbReference type="UniPathway" id="UPA00080"/>
<dbReference type="GO" id="GO:0016787">
    <property type="term" value="F:hydrolase activity"/>
    <property type="evidence" value="ECO:0007669"/>
    <property type="project" value="InterPro"/>
</dbReference>
<dbReference type="GO" id="GO:0016740">
    <property type="term" value="F:transferase activity"/>
    <property type="evidence" value="ECO:0007669"/>
    <property type="project" value="UniProtKB-KW"/>
</dbReference>
<dbReference type="Gene3D" id="3.30.420.190">
    <property type="entry name" value="conserved archaeal protein q6m145"/>
    <property type="match status" value="1"/>
</dbReference>
<dbReference type="InterPro" id="IPR002821">
    <property type="entry name" value="Hydantoinase_A"/>
</dbReference>
<dbReference type="Pfam" id="PF01968">
    <property type="entry name" value="Hydantoinase_A"/>
    <property type="match status" value="1"/>
</dbReference>
<accession>Q50834</accession>
<evidence type="ECO:0000250" key="1">
    <source>
        <dbReference type="UniProtKB" id="Q58250"/>
    </source>
</evidence>
<evidence type="ECO:0000305" key="2"/>
<proteinExistence type="inferred from homology"/>
<reference key="1">
    <citation type="journal article" date="1988" name="J. Bacteriol.">
        <title>Conservation of structure in the human gene encoding argininosuccinate synthetase and the argG genes of the archaebacteria Methanosarcina barkeri MS and Methanococcus vannielii.</title>
        <authorList>
            <person name="Morris C.J."/>
            <person name="Reeve J.N."/>
        </authorList>
    </citation>
    <scope>NUCLEOTIDE SEQUENCE [GENOMIC DNA]</scope>
</reference>
<gene>
    <name evidence="1" type="primary">mfnF</name>
</gene>
<name>MFNF_METVA</name>
<protein>
    <recommendedName>
        <fullName evidence="1">(4-{4-[2-(gamma-L-glutamylamino)ethyl]phenoxymethyl}furan-2-yl)methanamine synthase</fullName>
        <ecNumber evidence="1">2.5.1.131</ecNumber>
    </recommendedName>
    <alternativeName>
        <fullName evidence="1">4-[[4-(2-aminoethyl)phenoxy]-methyl]-2-furanmethanamine-glutamate synthase</fullName>
        <shortName evidence="1">APMF-Glu synthase</shortName>
    </alternativeName>
</protein>
<sequence length="222" mass="24655">AEFVSQNIDKNCILVDMGSTTTDIIPIVDGKAASNKTDLERLMNNELLYVGSLRTPLSFLSNKIMFKDTITNVSSEYFAITGDISLVLDKITEMDYSCDTPDGKPADKRNSLIRISKVLCSDLNQISADESINIAIEYYKILIDLILENVKKVSEKYGLKNIVITGLGEEILKDALSELTKSNEFNIISIKERYGKDVSLATPSFSVSILLKNELNAKLNRS</sequence>
<comment type="function">
    <text evidence="1">Catalyzes the condensation between 5-(aminomethyl)-3-furanmethanol diphosphate (F1-PP) and gamma-glutamyltyramine to produce APMF-Glu.</text>
</comment>
<comment type="catalytic activity">
    <reaction evidence="1">
        <text>gamma-L-glutamyltyramine + [5-(aminomethyl)furan-3-yl]methyl diphosphate = (4-{4-[2-(gamma-L-glutamylamino)ethyl]phenoxymethyl}furan-2-yl)methanamine + diphosphate</text>
        <dbReference type="Rhea" id="RHEA:47840"/>
        <dbReference type="ChEBI" id="CHEBI:33019"/>
        <dbReference type="ChEBI" id="CHEBI:83425"/>
        <dbReference type="ChEBI" id="CHEBI:88054"/>
        <dbReference type="ChEBI" id="CHEBI:88055"/>
        <dbReference type="EC" id="2.5.1.131"/>
    </reaction>
</comment>
<comment type="pathway">
    <text evidence="1">Cofactor biosynthesis; methanofuran biosynthesis.</text>
</comment>
<comment type="similarity">
    <text evidence="2">Belongs to the MfnF family.</text>
</comment>
<keyword id="KW-0808">Transferase</keyword>
<feature type="chain" id="PRO_0000107077" description="(4-{4-[2-(gamma-L-glutamylamino)ethyl]phenoxymethyl}furan-2-yl)methanamine synthase">
    <location>
        <begin position="1" status="less than"/>
        <end position="222"/>
    </location>
</feature>
<feature type="non-terminal residue">
    <location>
        <position position="1"/>
    </location>
</feature>